<comment type="function">
    <text evidence="1 2">Pore-forming subunit of the rod cyclic nucleotide-gated channel. Mediates rod photoresponses at dim light converting transient changes in intracellular cGMP levels into electrical signals. In the dark, cGMP levels are high and keep the channel open enabling a steady inward current carried by Na(+) and Ca(2+) ions that leads to membrane depolarization and neurotransmitter release from synaptic terminals. Upon photon absorption cGMP levels decline leading to channel closure and membrane hyperpolarization that ultimately slows neurotransmitter release and signals the presence of light, the end point of the phototransduction cascade. Conducts cGMP- and cAMP-gated ion currents, with permeability for monovalent and divalent cations. The selectivity for Ca(2+) over Na(+) increases with cGMP concentrations, whereas the selectivity among monovalent ions is independent of the cGMP levels.</text>
</comment>
<comment type="catalytic activity">
    <reaction evidence="2">
        <text>Ca(2+)(in) = Ca(2+)(out)</text>
        <dbReference type="Rhea" id="RHEA:29671"/>
        <dbReference type="ChEBI" id="CHEBI:29108"/>
    </reaction>
</comment>
<comment type="catalytic activity">
    <reaction evidence="2">
        <text>Na(+)(in) = Na(+)(out)</text>
        <dbReference type="Rhea" id="RHEA:34963"/>
        <dbReference type="ChEBI" id="CHEBI:29101"/>
    </reaction>
</comment>
<comment type="catalytic activity">
    <reaction evidence="2">
        <text>K(+)(in) = K(+)(out)</text>
        <dbReference type="Rhea" id="RHEA:29463"/>
        <dbReference type="ChEBI" id="CHEBI:29103"/>
    </reaction>
</comment>
<comment type="catalytic activity">
    <reaction evidence="2">
        <text>NH4(+)(in) = NH4(+)(out)</text>
        <dbReference type="Rhea" id="RHEA:28747"/>
        <dbReference type="ChEBI" id="CHEBI:28938"/>
    </reaction>
</comment>
<comment type="catalytic activity">
    <reaction evidence="2">
        <text>Rb(+)(in) = Rb(+)(out)</text>
        <dbReference type="Rhea" id="RHEA:78547"/>
        <dbReference type="ChEBI" id="CHEBI:49847"/>
    </reaction>
</comment>
<comment type="catalytic activity">
    <reaction evidence="2">
        <text>Li(+)(in) = Li(+)(out)</text>
        <dbReference type="Rhea" id="RHEA:78551"/>
        <dbReference type="ChEBI" id="CHEBI:49713"/>
    </reaction>
</comment>
<comment type="catalytic activity">
    <reaction evidence="2">
        <text>Cs(+)(in) = Cs(+)(out)</text>
        <dbReference type="Rhea" id="RHEA:78555"/>
        <dbReference type="ChEBI" id="CHEBI:49547"/>
    </reaction>
</comment>
<comment type="subunit">
    <text evidence="1 2">Forms heterotetrameric channels composed of CNGA1 and CNGB1 subunits with 3:1 stoichiometry (By similarity). May also form cyclic nucleotide-activated homotetrameric channels, that are efficiently activated by saturating cGMP, but poorly activated by saturating cAMP compared to the heterotetramer with CNGB1. The channel binds Ca(2+)-bound CALM1 via CaM1 and CaM2 regions of the CNGB1 subunit; this interaction modulates the affinity of the channel for cNMPs in response to intracellular Ca(2+) levels (By similarity).</text>
</comment>
<comment type="subcellular location">
    <subcellularLocation>
        <location evidence="1">Cell membrane</location>
        <topology evidence="3">Multi-pass membrane protein</topology>
    </subcellularLocation>
</comment>
<comment type="domain">
    <text evidence="1">The C-terminal coiled-coil domain mediates homotrimerization of CNGA1 subunit.</text>
</comment>
<comment type="domain">
    <text evidence="1">The cyclic nucleotide-binding domain (CNBD) comprises three helices and a beta-roll of eight beta-strands from CNGA1 and CNGB1 subunits. Upon cNMP binding transmits the conformational changes to the C-linker domain of the S6 helix to open the ion conduction pathway.</text>
</comment>
<comment type="domain">
    <text evidence="1">The ion conduction pathway consists of S5, S6 and pore helices from CNGA1 and CNGB1 subunits. It contains a central hydrophobic gate that opens upon cNMP binding.</text>
</comment>
<comment type="similarity">
    <text evidence="6">Belongs to the cyclic nucleotide-gated cation channel (TC 1.A.1.5) family. CNGA1 subfamily.</text>
</comment>
<accession>Q28279</accession>
<protein>
    <recommendedName>
        <fullName>Cyclic nucleotide-gated channel alpha-1</fullName>
        <shortName>CNG channel alpha-1</shortName>
        <shortName>CNG-1</shortName>
        <shortName evidence="5">CNG1</shortName>
    </recommendedName>
    <alternativeName>
        <fullName>Cyclic nucleotide-gated cation channel 1</fullName>
    </alternativeName>
    <alternativeName>
        <fullName>Cyclic nucleotide-gated channel, photoreceptor</fullName>
    </alternativeName>
    <alternativeName>
        <fullName evidence="1">Rod photoreceptor cGMP-gated cation channel subunit alpha</fullName>
    </alternativeName>
    <alternativeName>
        <fullName>cGMP-gated cation channel alpha-1</fullName>
    </alternativeName>
</protein>
<keyword id="KW-0106">Calcium</keyword>
<keyword id="KW-0107">Calcium channel</keyword>
<keyword id="KW-0109">Calcium transport</keyword>
<keyword id="KW-0114">cAMP</keyword>
<keyword id="KW-0116">cAMP-binding</keyword>
<keyword id="KW-1003">Cell membrane</keyword>
<keyword id="KW-0140">cGMP</keyword>
<keyword id="KW-0142">cGMP-binding</keyword>
<keyword id="KW-0175">Coiled coil</keyword>
<keyword id="KW-0325">Glycoprotein</keyword>
<keyword id="KW-0407">Ion channel</keyword>
<keyword id="KW-0406">Ion transport</keyword>
<keyword id="KW-1071">Ligand-gated ion channel</keyword>
<keyword id="KW-0472">Membrane</keyword>
<keyword id="KW-0547">Nucleotide-binding</keyword>
<keyword id="KW-1185">Reference proteome</keyword>
<keyword id="KW-0716">Sensory transduction</keyword>
<keyword id="KW-0915">Sodium</keyword>
<keyword id="KW-0894">Sodium channel</keyword>
<keyword id="KW-0739">Sodium transport</keyword>
<keyword id="KW-0812">Transmembrane</keyword>
<keyword id="KW-1133">Transmembrane helix</keyword>
<keyword id="KW-0813">Transport</keyword>
<keyword id="KW-0844">Vision</keyword>
<gene>
    <name evidence="5" type="primary">CNGA1</name>
    <name type="synonym">CNCG</name>
    <name type="synonym">CNCG1</name>
</gene>
<sequence length="691" mass="80251">MKKNIINTWYSFVNIPNVIVPDIEKEIRRMENGARSSFSDDDGDDDSASMFEESENETPHARDSCRNNSQRRDPSQREQYLPGAIALFNVNNSSNKEQEPKEKKKKKKEKKSKSGDKNENKKDSEKKKKKEKEKEKKNKEEKGKDKKEEEKKEVMVIDPAGNMYYNWLFCITLPVMYNWTMVIARACFDELQSDYLEYWIIFDYLSDIVYLLDMFVRTRTGYLEQGLLVREEAKLIEKYKSNLQFKLDFLSVIPTDLLYFKLGWNYPEIRLNRLLRISRMFEFFQRTETRTNYPNIFRISNLVMYIVIIIHWNACVYFSISKAIGFGNDTWVYPDVNDPEFGRLARKYVYSLYWSTLTLTTIGETPPPVRDSEYVFVVVDFLIGVLIFATIVGNIGSMISNMNAARAEFQARIDAIKQYMHFRNVSKDMEKRVIKWFDYLWTNKKTVDEKEVLKYLPDKLRAEIAINVHLDTLKKVRIFADCEAGLLVELVLKLQPQVYSPGDYICKKGDIGREMYIIKEGKLAVVADDGITQFVVLSDGSYFGEISILNIKGSKAGNRRTANIKSIGYSDLFCLSKDDLMEALTEYPDAKTMLEEKGKQILMKDGLLDINIANAGSDPKDLEEKVTRMEGSVDLLQTRFARILAEYESMQQKLKQRLTKVERFLKPIIDTEFSALEGTGDESRPLDSTQD</sequence>
<name>CNGA1_CANLF</name>
<dbReference type="EMBL" id="X99914">
    <property type="protein sequence ID" value="CAA68186.1"/>
    <property type="molecule type" value="Genomic_DNA"/>
</dbReference>
<dbReference type="EMBL" id="U83905">
    <property type="protein sequence ID" value="AAB61707.1"/>
    <property type="molecule type" value="mRNA"/>
</dbReference>
<dbReference type="PIR" id="JC6509">
    <property type="entry name" value="JC6509"/>
</dbReference>
<dbReference type="RefSeq" id="NP_001003222.1">
    <property type="nucleotide sequence ID" value="NM_001003222.1"/>
</dbReference>
<dbReference type="RefSeq" id="XP_005628028.1">
    <property type="nucleotide sequence ID" value="XM_005627971.1"/>
</dbReference>
<dbReference type="SMR" id="Q28279"/>
<dbReference type="FunCoup" id="Q28279">
    <property type="interactions" value="9"/>
</dbReference>
<dbReference type="STRING" id="9615.ENSCAFP00000035274"/>
<dbReference type="GlyCosmos" id="Q28279">
    <property type="glycosylation" value="1 site, No reported glycans"/>
</dbReference>
<dbReference type="PaxDb" id="9612-ENSCAFP00000035274"/>
<dbReference type="GeneID" id="403891"/>
<dbReference type="KEGG" id="cfa:403891"/>
<dbReference type="CTD" id="1259"/>
<dbReference type="eggNOG" id="KOG0500">
    <property type="taxonomic scope" value="Eukaryota"/>
</dbReference>
<dbReference type="InParanoid" id="Q28279"/>
<dbReference type="OrthoDB" id="421226at2759"/>
<dbReference type="Proteomes" id="UP000002254">
    <property type="component" value="Unplaced"/>
</dbReference>
<dbReference type="Proteomes" id="UP000694429">
    <property type="component" value="Unplaced"/>
</dbReference>
<dbReference type="Proteomes" id="UP000694542">
    <property type="component" value="Unplaced"/>
</dbReference>
<dbReference type="Proteomes" id="UP000805418">
    <property type="component" value="Unplaced"/>
</dbReference>
<dbReference type="GO" id="GO:0017071">
    <property type="term" value="C:intracellular cyclic nucleotide activated cation channel complex"/>
    <property type="evidence" value="ECO:0000318"/>
    <property type="project" value="GO_Central"/>
</dbReference>
<dbReference type="GO" id="GO:0005886">
    <property type="term" value="C:plasma membrane"/>
    <property type="evidence" value="ECO:0000318"/>
    <property type="project" value="GO_Central"/>
</dbReference>
<dbReference type="GO" id="GO:0120200">
    <property type="term" value="C:rod photoreceptor outer segment"/>
    <property type="evidence" value="ECO:0000250"/>
    <property type="project" value="UniProtKB"/>
</dbReference>
<dbReference type="GO" id="GO:0005262">
    <property type="term" value="F:calcium channel activity"/>
    <property type="evidence" value="ECO:0007669"/>
    <property type="project" value="UniProtKB-KW"/>
</dbReference>
<dbReference type="GO" id="GO:0030552">
    <property type="term" value="F:cAMP binding"/>
    <property type="evidence" value="ECO:0000250"/>
    <property type="project" value="UniProtKB"/>
</dbReference>
<dbReference type="GO" id="GO:0030553">
    <property type="term" value="F:cGMP binding"/>
    <property type="evidence" value="ECO:0000250"/>
    <property type="project" value="UniProtKB"/>
</dbReference>
<dbReference type="GO" id="GO:0005222">
    <property type="term" value="F:intracellularly cAMP-activated cation channel activity"/>
    <property type="evidence" value="ECO:0000250"/>
    <property type="project" value="UniProtKB"/>
</dbReference>
<dbReference type="GO" id="GO:0005223">
    <property type="term" value="F:intracellularly cGMP-activated cation channel activity"/>
    <property type="evidence" value="ECO:0000250"/>
    <property type="project" value="UniProtKB"/>
</dbReference>
<dbReference type="GO" id="GO:0044877">
    <property type="term" value="F:protein-containing complex binding"/>
    <property type="evidence" value="ECO:0000318"/>
    <property type="project" value="GO_Central"/>
</dbReference>
<dbReference type="GO" id="GO:0005272">
    <property type="term" value="F:sodium channel activity"/>
    <property type="evidence" value="ECO:0007669"/>
    <property type="project" value="UniProtKB-KW"/>
</dbReference>
<dbReference type="GO" id="GO:0006816">
    <property type="term" value="P:calcium ion transport"/>
    <property type="evidence" value="ECO:0000250"/>
    <property type="project" value="UniProtKB"/>
</dbReference>
<dbReference type="GO" id="GO:0098655">
    <property type="term" value="P:monoatomic cation transmembrane transport"/>
    <property type="evidence" value="ECO:0000318"/>
    <property type="project" value="GO_Central"/>
</dbReference>
<dbReference type="GO" id="GO:0006814">
    <property type="term" value="P:sodium ion transport"/>
    <property type="evidence" value="ECO:0000250"/>
    <property type="project" value="UniProtKB"/>
</dbReference>
<dbReference type="GO" id="GO:0007601">
    <property type="term" value="P:visual perception"/>
    <property type="evidence" value="ECO:0007669"/>
    <property type="project" value="UniProtKB-KW"/>
</dbReference>
<dbReference type="CDD" id="cd00038">
    <property type="entry name" value="CAP_ED"/>
    <property type="match status" value="1"/>
</dbReference>
<dbReference type="FunFam" id="1.20.5.170:FF:000069">
    <property type="entry name" value="cGMP-gated cation channel alpha-1"/>
    <property type="match status" value="1"/>
</dbReference>
<dbReference type="FunFam" id="2.60.120.10:FF:000002">
    <property type="entry name" value="Cyclic nucleotide gated channel alpha 1a"/>
    <property type="match status" value="1"/>
</dbReference>
<dbReference type="FunFam" id="1.10.287.630:FF:000001">
    <property type="entry name" value="Cyclic nucleotide-gated channel alpha 3"/>
    <property type="match status" value="1"/>
</dbReference>
<dbReference type="FunFam" id="1.10.287.70:FF:000030">
    <property type="entry name" value="Cyclic nucleotide-gated channel alpha 3"/>
    <property type="match status" value="1"/>
</dbReference>
<dbReference type="FunFam" id="1.20.5.300:FF:000002">
    <property type="entry name" value="Cyclic nucleotide-gated channel alpha 3"/>
    <property type="match status" value="1"/>
</dbReference>
<dbReference type="Gene3D" id="1.10.287.70">
    <property type="match status" value="1"/>
</dbReference>
<dbReference type="Gene3D" id="1.20.5.170">
    <property type="match status" value="1"/>
</dbReference>
<dbReference type="Gene3D" id="1.10.287.630">
    <property type="entry name" value="Helix hairpin bin"/>
    <property type="match status" value="1"/>
</dbReference>
<dbReference type="Gene3D" id="2.60.120.10">
    <property type="entry name" value="Jelly Rolls"/>
    <property type="match status" value="1"/>
</dbReference>
<dbReference type="InterPro" id="IPR032406">
    <property type="entry name" value="CLZ_dom"/>
</dbReference>
<dbReference type="InterPro" id="IPR050866">
    <property type="entry name" value="CNG_cation_channel"/>
</dbReference>
<dbReference type="InterPro" id="IPR018488">
    <property type="entry name" value="cNMP-bd_CS"/>
</dbReference>
<dbReference type="InterPro" id="IPR000595">
    <property type="entry name" value="cNMP-bd_dom"/>
</dbReference>
<dbReference type="InterPro" id="IPR018490">
    <property type="entry name" value="cNMP-bd_dom_sf"/>
</dbReference>
<dbReference type="InterPro" id="IPR005821">
    <property type="entry name" value="Ion_trans_dom"/>
</dbReference>
<dbReference type="InterPro" id="IPR014710">
    <property type="entry name" value="RmlC-like_jellyroll"/>
</dbReference>
<dbReference type="PANTHER" id="PTHR45638">
    <property type="entry name" value="CYCLIC NUCLEOTIDE-GATED CATION CHANNEL SUBUNIT A"/>
    <property type="match status" value="1"/>
</dbReference>
<dbReference type="PANTHER" id="PTHR45638:SF9">
    <property type="entry name" value="CYCLIC NUCLEOTIDE-GATED CHANNEL ROD PHOTORECEPTOR SUBUNIT ALPHA"/>
    <property type="match status" value="1"/>
</dbReference>
<dbReference type="Pfam" id="PF16526">
    <property type="entry name" value="CLZ"/>
    <property type="match status" value="1"/>
</dbReference>
<dbReference type="Pfam" id="PF00027">
    <property type="entry name" value="cNMP_binding"/>
    <property type="match status" value="1"/>
</dbReference>
<dbReference type="Pfam" id="PF00520">
    <property type="entry name" value="Ion_trans"/>
    <property type="match status" value="1"/>
</dbReference>
<dbReference type="SMART" id="SM00100">
    <property type="entry name" value="cNMP"/>
    <property type="match status" value="1"/>
</dbReference>
<dbReference type="SUPFAM" id="SSF51206">
    <property type="entry name" value="cAMP-binding domain-like"/>
    <property type="match status" value="1"/>
</dbReference>
<dbReference type="SUPFAM" id="SSF81324">
    <property type="entry name" value="Voltage-gated potassium channels"/>
    <property type="match status" value="1"/>
</dbReference>
<dbReference type="PROSITE" id="PS00888">
    <property type="entry name" value="CNMP_BINDING_1"/>
    <property type="match status" value="1"/>
</dbReference>
<dbReference type="PROSITE" id="PS00889">
    <property type="entry name" value="CNMP_BINDING_2"/>
    <property type="match status" value="1"/>
</dbReference>
<dbReference type="PROSITE" id="PS50042">
    <property type="entry name" value="CNMP_BINDING_3"/>
    <property type="match status" value="1"/>
</dbReference>
<proteinExistence type="evidence at transcript level"/>
<evidence type="ECO:0000250" key="1">
    <source>
        <dbReference type="UniProtKB" id="P29973"/>
    </source>
</evidence>
<evidence type="ECO:0000250" key="2">
    <source>
        <dbReference type="UniProtKB" id="Q00194"/>
    </source>
</evidence>
<evidence type="ECO:0000255" key="3"/>
<evidence type="ECO:0000256" key="4">
    <source>
        <dbReference type="SAM" id="MobiDB-lite"/>
    </source>
</evidence>
<evidence type="ECO:0000303" key="5">
    <source>
    </source>
</evidence>
<evidence type="ECO:0000305" key="6"/>
<reference key="1">
    <citation type="journal article" date="1997" name="Gene">
        <title>Characterization of canine rod photoreceptor cGMP-gated cation channel alpha-subunit gene and exclusion of its involvement in the hereditary retinal dystrophy of Swedish Briards.</title>
        <authorList>
            <person name="Veske A."/>
            <person name="Nilsson S.E.G."/>
            <person name="Gal A."/>
        </authorList>
    </citation>
    <scope>NUCLEOTIDE SEQUENCE [GENOMIC DNA]</scope>
    <source>
        <strain>Beagle X Briard</strain>
    </source>
</reference>
<reference key="2">
    <citation type="journal article" date="1997" name="Exp. Eye Res.">
        <title>Canine rod photoreceptor cGMP-gated channel protein alpha-subunit: studies on the expression of the gene and characterization of the cDNA.</title>
        <authorList>
            <person name="Zhang Q."/>
            <person name="Pearce-Kelling S."/>
            <person name="Acland G.M."/>
            <person name="Aguirre G.D."/>
            <person name="Ray K."/>
        </authorList>
    </citation>
    <scope>NUCLEOTIDE SEQUENCE [MRNA]</scope>
</reference>
<reference key="3">
    <citation type="journal article" date="2001" name="Science">
        <title>Nomenclature for ion channel subunits.</title>
        <authorList>
            <person name="Bradley J."/>
            <person name="Frings S."/>
            <person name="Yau K.W."/>
            <person name="Reed R."/>
        </authorList>
    </citation>
    <scope>NOMENCLATURE</scope>
</reference>
<feature type="chain" id="PRO_0000219307" description="Cyclic nucleotide-gated channel alpha-1">
    <location>
        <begin position="1"/>
        <end position="691"/>
    </location>
</feature>
<feature type="topological domain" description="Cytoplasmic" evidence="6">
    <location>
        <begin position="1"/>
        <end position="168"/>
    </location>
</feature>
<feature type="transmembrane region" description="Helical; Name=S1" evidence="1">
    <location>
        <begin position="169"/>
        <end position="190"/>
    </location>
</feature>
<feature type="topological domain" description="Extracellular" evidence="6">
    <location>
        <begin position="191"/>
        <end position="200"/>
    </location>
</feature>
<feature type="transmembrane region" description="Helical; Name=S2" evidence="1">
    <location>
        <begin position="201"/>
        <end position="221"/>
    </location>
</feature>
<feature type="topological domain" description="Cytoplasmic" evidence="6">
    <location>
        <begin position="222"/>
        <end position="246"/>
    </location>
</feature>
<feature type="transmembrane region" description="Helical; Name=S3" evidence="1">
    <location>
        <begin position="247"/>
        <end position="265"/>
    </location>
</feature>
<feature type="topological domain" description="Extracellular" evidence="6">
    <location>
        <begin position="266"/>
        <end position="270"/>
    </location>
</feature>
<feature type="transmembrane region" description="Helical; Name=S4" evidence="1">
    <location>
        <begin position="271"/>
        <end position="289"/>
    </location>
</feature>
<feature type="topological domain" description="Cytoplasmic" evidence="6">
    <location>
        <begin position="290"/>
        <end position="296"/>
    </location>
</feature>
<feature type="transmembrane region" description="Helical; Name=S5" evidence="1">
    <location>
        <begin position="297"/>
        <end position="320"/>
    </location>
</feature>
<feature type="topological domain" description="Extracellular" evidence="6">
    <location>
        <begin position="321"/>
        <end position="343"/>
    </location>
</feature>
<feature type="transmembrane region" description="Helical; Name=P-helix" evidence="1">
    <location>
        <begin position="344"/>
        <end position="378"/>
    </location>
</feature>
<feature type="transmembrane region" description="Helical; Name=S6" evidence="1">
    <location>
        <begin position="379"/>
        <end position="403"/>
    </location>
</feature>
<feature type="topological domain" description="Cytoplasmic" evidence="6">
    <location>
        <begin position="404"/>
        <end position="691"/>
    </location>
</feature>
<feature type="region of interest" description="Disordered" evidence="4">
    <location>
        <begin position="31"/>
        <end position="151"/>
    </location>
</feature>
<feature type="region of interest" description="Ion conduction pathway" evidence="1">
    <location>
        <begin position="294"/>
        <end position="402"/>
    </location>
</feature>
<feature type="region of interest" description="Selectivity filter" evidence="1">
    <location>
        <begin position="361"/>
        <end position="364"/>
    </location>
</feature>
<feature type="region of interest" description="C-linker" evidence="1">
    <location>
        <begin position="404"/>
        <end position="480"/>
    </location>
</feature>
<feature type="region of interest" description="Cyclic nucleotide-binding domain" evidence="1">
    <location>
        <begin position="484"/>
        <end position="604"/>
    </location>
</feature>
<feature type="coiled-coil region" evidence="1">
    <location>
        <begin position="622"/>
        <end position="676"/>
    </location>
</feature>
<feature type="compositionally biased region" description="Acidic residues" evidence="4">
    <location>
        <begin position="39"/>
        <end position="56"/>
    </location>
</feature>
<feature type="compositionally biased region" description="Basic and acidic residues" evidence="4">
    <location>
        <begin position="57"/>
        <end position="76"/>
    </location>
</feature>
<feature type="compositionally biased region" description="Basic and acidic residues" evidence="4">
    <location>
        <begin position="112"/>
        <end position="151"/>
    </location>
</feature>
<feature type="binding site" evidence="1">
    <location>
        <position position="544"/>
    </location>
    <ligand>
        <name>3',5'-cyclic GMP</name>
        <dbReference type="ChEBI" id="CHEBI:57746"/>
    </ligand>
</feature>
<feature type="binding site" evidence="1">
    <location>
        <position position="547"/>
    </location>
    <ligand>
        <name>3',5'-cyclic GMP</name>
        <dbReference type="ChEBI" id="CHEBI:57746"/>
    </ligand>
</feature>
<feature type="binding site" evidence="1">
    <location>
        <position position="560"/>
    </location>
    <ligand>
        <name>3',5'-cyclic AMP</name>
        <dbReference type="ChEBI" id="CHEBI:58165"/>
    </ligand>
</feature>
<feature type="binding site" evidence="1">
    <location>
        <position position="560"/>
    </location>
    <ligand>
        <name>3',5'-cyclic GMP</name>
        <dbReference type="ChEBI" id="CHEBI:57746"/>
    </ligand>
</feature>
<feature type="binding site" evidence="1">
    <location>
        <position position="561"/>
    </location>
    <ligand>
        <name>3',5'-cyclic AMP</name>
        <dbReference type="ChEBI" id="CHEBI:58165"/>
    </ligand>
</feature>
<feature type="binding site" evidence="1">
    <location>
        <position position="561"/>
    </location>
    <ligand>
        <name>3',5'-cyclic GMP</name>
        <dbReference type="ChEBI" id="CHEBI:57746"/>
    </ligand>
</feature>
<feature type="site" description="Central gate" evidence="1">
    <location>
        <position position="388"/>
    </location>
</feature>
<feature type="site" description="Central gate" evidence="1">
    <location>
        <position position="392"/>
    </location>
</feature>
<feature type="glycosylation site" description="N-linked (GlcNAc...) asparagine" evidence="2">
    <location>
        <position position="328"/>
    </location>
</feature>
<organism>
    <name type="scientific">Canis lupus familiaris</name>
    <name type="common">Dog</name>
    <name type="synonym">Canis familiaris</name>
    <dbReference type="NCBI Taxonomy" id="9615"/>
    <lineage>
        <taxon>Eukaryota</taxon>
        <taxon>Metazoa</taxon>
        <taxon>Chordata</taxon>
        <taxon>Craniata</taxon>
        <taxon>Vertebrata</taxon>
        <taxon>Euteleostomi</taxon>
        <taxon>Mammalia</taxon>
        <taxon>Eutheria</taxon>
        <taxon>Laurasiatheria</taxon>
        <taxon>Carnivora</taxon>
        <taxon>Caniformia</taxon>
        <taxon>Canidae</taxon>
        <taxon>Canis</taxon>
    </lineage>
</organism>